<comment type="function">
    <text evidence="1">Transfers a methylene group from S-adenosyl-L-methionine to the cis double bond of an unsaturated fatty acid chain resulting in the replacement of the double bond with a methylene bridge.</text>
</comment>
<comment type="catalytic activity">
    <reaction>
        <text>a 1-acyl-2-(9Z)-enoyl-sn-glycero-3-phospholipid + S-adenosyl-L-methionine = a 1-acyl-2-(9-cyclopronane)-acyl-sn-glycero-3-phospholipid + S-adenosyl-L-homocysteine + H(+)</text>
        <dbReference type="Rhea" id="RHEA:11988"/>
        <dbReference type="ChEBI" id="CHEBI:15378"/>
        <dbReference type="ChEBI" id="CHEBI:57856"/>
        <dbReference type="ChEBI" id="CHEBI:59789"/>
        <dbReference type="ChEBI" id="CHEBI:76593"/>
        <dbReference type="ChEBI" id="CHEBI:76594"/>
        <dbReference type="EC" id="2.1.1.79"/>
    </reaction>
</comment>
<comment type="subcellular location">
    <subcellularLocation>
        <location evidence="1">Cytoplasm</location>
    </subcellularLocation>
</comment>
<comment type="similarity">
    <text evidence="2">Belongs to the CFA/CMAS family.</text>
</comment>
<reference key="1">
    <citation type="submission" date="1994-05" db="EMBL/GenBank/DDBJ databases">
        <authorList>
            <person name="Daniel R."/>
            <person name="Gottschalk G."/>
        </authorList>
    </citation>
    <scope>NUCLEOTIDE SEQUENCE [GENOMIC DNA]</scope>
    <source>
        <strain>ATCC 6750 / DSM 30040 / NCIB 8173 / M8BK</strain>
    </source>
</reference>
<sequence length="89" mass="10609">ISHIAEASESRFVMEDWHNFGSDYDKTLMAWHERFNQAWPELSSRYSATFRRMFNYYLCACAGAFRARDIELWQVLFSRGVEGGIRVYR</sequence>
<evidence type="ECO:0000250" key="1"/>
<evidence type="ECO:0000305" key="2"/>
<organism>
    <name type="scientific">Citrobacter freundii</name>
    <dbReference type="NCBI Taxonomy" id="546"/>
    <lineage>
        <taxon>Bacteria</taxon>
        <taxon>Pseudomonadati</taxon>
        <taxon>Pseudomonadota</taxon>
        <taxon>Gammaproteobacteria</taxon>
        <taxon>Enterobacterales</taxon>
        <taxon>Enterobacteriaceae</taxon>
        <taxon>Citrobacter</taxon>
        <taxon>Citrobacter freundii complex</taxon>
    </lineage>
</organism>
<keyword id="KW-0963">Cytoplasm</keyword>
<keyword id="KW-0444">Lipid biosynthesis</keyword>
<keyword id="KW-0443">Lipid metabolism</keyword>
<keyword id="KW-0489">Methyltransferase</keyword>
<keyword id="KW-0949">S-adenosyl-L-methionine</keyword>
<keyword id="KW-0808">Transferase</keyword>
<feature type="chain" id="PRO_0000089570" description="Cyclopropane-fatty-acyl-phospholipid synthase">
    <location>
        <begin position="1" status="less than"/>
        <end position="89"/>
    </location>
</feature>
<feature type="active site" evidence="1">
    <location>
        <position position="61"/>
    </location>
</feature>
<feature type="non-terminal residue">
    <location>
        <position position="1"/>
    </location>
</feature>
<gene>
    <name type="primary">cfa</name>
</gene>
<name>CFA_CITFR</name>
<protein>
    <recommendedName>
        <fullName>Cyclopropane-fatty-acyl-phospholipid synthase</fullName>
        <shortName>CFA synthase</shortName>
        <shortName>Cyclopropane fatty acid synthase</shortName>
        <ecNumber>2.1.1.79</ecNumber>
    </recommendedName>
</protein>
<proteinExistence type="inferred from homology"/>
<dbReference type="EC" id="2.1.1.79"/>
<dbReference type="EMBL" id="U09771">
    <property type="protein sequence ID" value="AAB48842.1"/>
    <property type="molecule type" value="Genomic_DNA"/>
</dbReference>
<dbReference type="SMR" id="P45509"/>
<dbReference type="STRING" id="1333848.CFNIH1_02655"/>
<dbReference type="GO" id="GO:0005737">
    <property type="term" value="C:cytoplasm"/>
    <property type="evidence" value="ECO:0007669"/>
    <property type="project" value="UniProtKB-SubCell"/>
</dbReference>
<dbReference type="GO" id="GO:0008825">
    <property type="term" value="F:cyclopropane-fatty-acyl-phospholipid synthase activity"/>
    <property type="evidence" value="ECO:0007669"/>
    <property type="project" value="UniProtKB-EC"/>
</dbReference>
<dbReference type="GO" id="GO:0006629">
    <property type="term" value="P:lipid metabolic process"/>
    <property type="evidence" value="ECO:0007669"/>
    <property type="project" value="UniProtKB-KW"/>
</dbReference>
<dbReference type="GO" id="GO:0032259">
    <property type="term" value="P:methylation"/>
    <property type="evidence" value="ECO:0007669"/>
    <property type="project" value="UniProtKB-KW"/>
</dbReference>
<dbReference type="Gene3D" id="3.40.50.150">
    <property type="entry name" value="Vaccinia Virus protein VP39"/>
    <property type="match status" value="1"/>
</dbReference>
<dbReference type="InterPro" id="IPR050723">
    <property type="entry name" value="CFA/CMAS"/>
</dbReference>
<dbReference type="InterPro" id="IPR029063">
    <property type="entry name" value="SAM-dependent_MTases_sf"/>
</dbReference>
<dbReference type="PANTHER" id="PTHR43667">
    <property type="entry name" value="CYCLOPROPANE-FATTY-ACYL-PHOSPHOLIPID SYNTHASE"/>
    <property type="match status" value="1"/>
</dbReference>
<dbReference type="PANTHER" id="PTHR43667:SF1">
    <property type="entry name" value="CYCLOPROPANE-FATTY-ACYL-PHOSPHOLIPID SYNTHASE"/>
    <property type="match status" value="1"/>
</dbReference>
<dbReference type="Pfam" id="PF02353">
    <property type="entry name" value="CMAS"/>
    <property type="match status" value="1"/>
</dbReference>
<dbReference type="SUPFAM" id="SSF53335">
    <property type="entry name" value="S-adenosyl-L-methionine-dependent methyltransferases"/>
    <property type="match status" value="1"/>
</dbReference>
<accession>P45509</accession>